<keyword id="KW-0963">Cytoplasm</keyword>
<keyword id="KW-0328">Glycosyltransferase</keyword>
<keyword id="KW-0539">Nucleus</keyword>
<keyword id="KW-0660">Purine salvage</keyword>
<keyword id="KW-1185">Reference proteome</keyword>
<keyword id="KW-0808">Transferase</keyword>
<proteinExistence type="inferred from homology"/>
<organism>
    <name type="scientific">Ajellomyces capsulatus (strain G186AR / H82 / ATCC MYA-2454 / RMSCC 2432)</name>
    <name type="common">Darling's disease fungus</name>
    <name type="synonym">Histoplasma capsulatum</name>
    <dbReference type="NCBI Taxonomy" id="447093"/>
    <lineage>
        <taxon>Eukaryota</taxon>
        <taxon>Fungi</taxon>
        <taxon>Dikarya</taxon>
        <taxon>Ascomycota</taxon>
        <taxon>Pezizomycotina</taxon>
        <taxon>Eurotiomycetes</taxon>
        <taxon>Eurotiomycetidae</taxon>
        <taxon>Onygenales</taxon>
        <taxon>Ajellomycetaceae</taxon>
        <taxon>Histoplasma</taxon>
    </lineage>
</organism>
<gene>
    <name type="ORF">HCBG_05904</name>
</gene>
<feature type="chain" id="PRO_0000415123" description="S-methyl-5'-thioadenosine phosphorylase">
    <location>
        <begin position="1"/>
        <end position="313"/>
    </location>
</feature>
<feature type="binding site" evidence="1">
    <location>
        <position position="20"/>
    </location>
    <ligand>
        <name>phosphate</name>
        <dbReference type="ChEBI" id="CHEBI:43474"/>
    </ligand>
</feature>
<feature type="binding site" evidence="1">
    <location>
        <begin position="68"/>
        <end position="69"/>
    </location>
    <ligand>
        <name>phosphate</name>
        <dbReference type="ChEBI" id="CHEBI:43474"/>
    </ligand>
</feature>
<feature type="binding site" evidence="1">
    <location>
        <begin position="101"/>
        <end position="102"/>
    </location>
    <ligand>
        <name>phosphate</name>
        <dbReference type="ChEBI" id="CHEBI:43474"/>
    </ligand>
</feature>
<feature type="binding site" evidence="1">
    <location>
        <position position="203"/>
    </location>
    <ligand>
        <name>substrate</name>
    </ligand>
</feature>
<feature type="binding site" evidence="1">
    <location>
        <position position="204"/>
    </location>
    <ligand>
        <name>phosphate</name>
        <dbReference type="ChEBI" id="CHEBI:43474"/>
    </ligand>
</feature>
<feature type="binding site" evidence="1">
    <location>
        <begin position="227"/>
        <end position="229"/>
    </location>
    <ligand>
        <name>substrate</name>
    </ligand>
</feature>
<feature type="site" description="Important for substrate specificity" evidence="1">
    <location>
        <position position="185"/>
    </location>
</feature>
<feature type="site" description="Important for substrate specificity" evidence="1">
    <location>
        <position position="240"/>
    </location>
</feature>
<reference key="1">
    <citation type="submission" date="2009-02" db="EMBL/GenBank/DDBJ databases">
        <title>The genome sequence of Ajellomyces capsulatus strain G186AR.</title>
        <authorList>
            <person name="Champion M."/>
            <person name="Cuomo C.A."/>
            <person name="Ma L.-J."/>
            <person name="Henn M.R."/>
            <person name="Sil A."/>
            <person name="Goldman B."/>
            <person name="Young S.K."/>
            <person name="Kodira C.D."/>
            <person name="Zeng Q."/>
            <person name="Koehrsen M."/>
            <person name="Alvarado L."/>
            <person name="Berlin A."/>
            <person name="Borenstein D."/>
            <person name="Chen Z."/>
            <person name="Engels R."/>
            <person name="Freedman E."/>
            <person name="Gellesch M."/>
            <person name="Goldberg J."/>
            <person name="Griggs A."/>
            <person name="Gujja S."/>
            <person name="Heiman D."/>
            <person name="Hepburn T."/>
            <person name="Howarth C."/>
            <person name="Jen D."/>
            <person name="Larson L."/>
            <person name="Lewis B."/>
            <person name="Mehta T."/>
            <person name="Park D."/>
            <person name="Pearson M."/>
            <person name="Roberts A."/>
            <person name="Saif S."/>
            <person name="Shea T."/>
            <person name="Shenoy N."/>
            <person name="Sisk P."/>
            <person name="Stolte C."/>
            <person name="Sykes S."/>
            <person name="Walk T."/>
            <person name="White J."/>
            <person name="Yandava C."/>
            <person name="Klein B."/>
            <person name="McEwen J.G."/>
            <person name="Puccia R."/>
            <person name="Goldman G.H."/>
            <person name="Felipe M.S."/>
            <person name="Nino-Vega G."/>
            <person name="San-Blas G."/>
            <person name="Taylor J."/>
            <person name="Mendoza L."/>
            <person name="Galagan J.E."/>
            <person name="Nusbaum C."/>
            <person name="Birren B.W."/>
        </authorList>
    </citation>
    <scope>NUCLEOTIDE SEQUENCE [LARGE SCALE GENOMIC DNA]</scope>
    <source>
        <strain>G186AR / H82 / ATCC MYA-2454 / RMSCC 2432</strain>
    </source>
</reference>
<accession>C0NRX4</accession>
<comment type="function">
    <text evidence="1">Catalyzes the reversible phosphorylation of S-methyl-5'-thioadenosine (MTA) to adenine and 5-methylthioribose-1-phosphate. Involved in the breakdown of MTA, a major by-product of polyamine biosynthesis. Responsible for the first step in the methionine salvage pathway after MTA has been generated from S-adenosylmethionine. Has broad substrate specificity with 6-aminopurine nucleosides as preferred substrates.</text>
</comment>
<comment type="catalytic activity">
    <reaction evidence="1">
        <text>S-methyl-5'-thioadenosine + phosphate = 5-(methylsulfanyl)-alpha-D-ribose 1-phosphate + adenine</text>
        <dbReference type="Rhea" id="RHEA:11852"/>
        <dbReference type="ChEBI" id="CHEBI:16708"/>
        <dbReference type="ChEBI" id="CHEBI:17509"/>
        <dbReference type="ChEBI" id="CHEBI:43474"/>
        <dbReference type="ChEBI" id="CHEBI:58533"/>
        <dbReference type="EC" id="2.4.2.28"/>
    </reaction>
</comment>
<comment type="pathway">
    <text evidence="1">Amino-acid biosynthesis; L-methionine biosynthesis via salvage pathway; S-methyl-5-thio-alpha-D-ribose 1-phosphate from S-methyl-5'-thioadenosine (phosphorylase route): step 1/1.</text>
</comment>
<comment type="subunit">
    <text evidence="1">Homotrimer.</text>
</comment>
<comment type="subcellular location">
    <subcellularLocation>
        <location evidence="1">Cytoplasm</location>
    </subcellularLocation>
    <subcellularLocation>
        <location evidence="1">Nucleus</location>
    </subcellularLocation>
</comment>
<comment type="similarity">
    <text evidence="1">Belongs to the PNP/MTAP phosphorylase family. MTAP subfamily.</text>
</comment>
<protein>
    <recommendedName>
        <fullName evidence="1">S-methyl-5'-thioadenosine phosphorylase</fullName>
        <ecNumber evidence="1">2.4.2.28</ecNumber>
    </recommendedName>
    <alternativeName>
        <fullName evidence="1">5'-methylthioadenosine phosphorylase</fullName>
        <shortName evidence="1">MTA phosphorylase</shortName>
        <shortName evidence="1">MTAP</shortName>
        <shortName evidence="1">MTAPase</shortName>
    </alternativeName>
</protein>
<dbReference type="EC" id="2.4.2.28" evidence="1"/>
<dbReference type="EMBL" id="GG663370">
    <property type="protein sequence ID" value="EEH05640.1"/>
    <property type="molecule type" value="Genomic_DNA"/>
</dbReference>
<dbReference type="RefSeq" id="XP_045286121.1">
    <property type="nucleotide sequence ID" value="XM_045432953.1"/>
</dbReference>
<dbReference type="SMR" id="C0NRX4"/>
<dbReference type="FunCoup" id="C0NRX4">
    <property type="interactions" value="381"/>
</dbReference>
<dbReference type="STRING" id="447093.C0NRX4"/>
<dbReference type="GeneID" id="69038920"/>
<dbReference type="VEuPathDB" id="FungiDB:I7I50_06159"/>
<dbReference type="HOGENOM" id="CLU_054456_0_1_1"/>
<dbReference type="InParanoid" id="C0NRX4"/>
<dbReference type="UniPathway" id="UPA00904">
    <property type="reaction ID" value="UER00873"/>
</dbReference>
<dbReference type="Proteomes" id="UP000001631">
    <property type="component" value="Unassembled WGS sequence"/>
</dbReference>
<dbReference type="GO" id="GO:0005829">
    <property type="term" value="C:cytosol"/>
    <property type="evidence" value="ECO:0007669"/>
    <property type="project" value="TreeGrafter"/>
</dbReference>
<dbReference type="GO" id="GO:0005634">
    <property type="term" value="C:nucleus"/>
    <property type="evidence" value="ECO:0007669"/>
    <property type="project" value="UniProtKB-SubCell"/>
</dbReference>
<dbReference type="GO" id="GO:0017061">
    <property type="term" value="F:S-methyl-5-thioadenosine phosphorylase activity"/>
    <property type="evidence" value="ECO:0007669"/>
    <property type="project" value="UniProtKB-UniRule"/>
</dbReference>
<dbReference type="GO" id="GO:0019509">
    <property type="term" value="P:L-methionine salvage from methylthioadenosine"/>
    <property type="evidence" value="ECO:0007669"/>
    <property type="project" value="UniProtKB-UniRule"/>
</dbReference>
<dbReference type="GO" id="GO:0006166">
    <property type="term" value="P:purine ribonucleoside salvage"/>
    <property type="evidence" value="ECO:0007669"/>
    <property type="project" value="UniProtKB-KW"/>
</dbReference>
<dbReference type="CDD" id="cd09010">
    <property type="entry name" value="MTAP_SsMTAPII_like_MTIP"/>
    <property type="match status" value="1"/>
</dbReference>
<dbReference type="FunFam" id="3.40.50.1580:FF:000008">
    <property type="entry name" value="S-methyl-5'-thioadenosine phosphorylase"/>
    <property type="match status" value="1"/>
</dbReference>
<dbReference type="Gene3D" id="3.40.50.1580">
    <property type="entry name" value="Nucleoside phosphorylase domain"/>
    <property type="match status" value="1"/>
</dbReference>
<dbReference type="HAMAP" id="MF_01963">
    <property type="entry name" value="MTAP"/>
    <property type="match status" value="1"/>
</dbReference>
<dbReference type="InterPro" id="IPR010044">
    <property type="entry name" value="MTAP"/>
</dbReference>
<dbReference type="InterPro" id="IPR000845">
    <property type="entry name" value="Nucleoside_phosphorylase_d"/>
</dbReference>
<dbReference type="InterPro" id="IPR035994">
    <property type="entry name" value="Nucleoside_phosphorylase_sf"/>
</dbReference>
<dbReference type="InterPro" id="IPR018099">
    <property type="entry name" value="Purine_phosphorylase-2_CS"/>
</dbReference>
<dbReference type="NCBIfam" id="TIGR01694">
    <property type="entry name" value="MTAP"/>
    <property type="match status" value="1"/>
</dbReference>
<dbReference type="PANTHER" id="PTHR42679">
    <property type="entry name" value="S-METHYL-5'-THIOADENOSINE PHOSPHORYLASE"/>
    <property type="match status" value="1"/>
</dbReference>
<dbReference type="PANTHER" id="PTHR42679:SF2">
    <property type="entry name" value="S-METHYL-5'-THIOADENOSINE PHOSPHORYLASE"/>
    <property type="match status" value="1"/>
</dbReference>
<dbReference type="Pfam" id="PF01048">
    <property type="entry name" value="PNP_UDP_1"/>
    <property type="match status" value="1"/>
</dbReference>
<dbReference type="SUPFAM" id="SSF53167">
    <property type="entry name" value="Purine and uridine phosphorylases"/>
    <property type="match status" value="1"/>
</dbReference>
<dbReference type="PROSITE" id="PS01240">
    <property type="entry name" value="PNP_MTAP_2"/>
    <property type="match status" value="1"/>
</dbReference>
<name>MTAP_AJECG</name>
<sequence length="313" mass="34036">MAALRDTYNDPVHIAVIGGTGLRELPHFTQVASLNITTPWGPPSSPITILHHTCSTSGKVVPVAFLSRHGLHHEYAPHEVPARANIAALRSIGVRSIVAFSAVGSLQEAIKPRDFVVPDQVIDRTKGVRPWTFFEGGAVAHVGFADPFDEQMAKVVRACGHSLEGDGVVLHDRGTLICMEGPQFSTRAESNLYRSWGGSIINMSCIPEAKLAREAEIAYQMICMSTDYDCWHSEAADVTVDMVMANMKMNSVNARNFIGAVLDELTKDEHAALVQAKHLEGTCKFGLSTSPGYLSAEALTKLSWLFPGYFSNN</sequence>
<evidence type="ECO:0000255" key="1">
    <source>
        <dbReference type="HAMAP-Rule" id="MF_03155"/>
    </source>
</evidence>